<proteinExistence type="evidence at protein level"/>
<comment type="function">
    <text evidence="1">May be required for replication-independent chromatin assembly.</text>
</comment>
<comment type="subunit">
    <text evidence="4 5">Component of the HIRA complex made of UBN1, UBN2, ASF1A, CABIN1 and HIRA (PubMed:25086063, PubMed:25600486). Interacts with HIRA (PubMed:25086063).</text>
</comment>
<comment type="subcellular location">
    <subcellularLocation>
        <location evidence="2 4">Nucleus</location>
    </subcellularLocation>
    <subcellularLocation>
        <location evidence="4">Nucleus</location>
        <location evidence="4">Nucleolus</location>
    </subcellularLocation>
    <text evidence="4">Localized at rDNA loci in the nucleolus.</text>
</comment>
<comment type="disruption phenotype">
    <text evidence="4">No visible phenotype.</text>
</comment>
<comment type="similarity">
    <text evidence="8">Belongs to the ubinuclein family.</text>
</comment>
<comment type="sequence caution" evidence="8">
    <conflict type="erroneous gene model prediction">
        <sequence resource="EMBL-CDS" id="AAC34359"/>
    </conflict>
</comment>
<comment type="sequence caution" evidence="8">
    <conflict type="erroneous gene model prediction">
        <sequence resource="EMBL-CDS" id="AAG29192"/>
    </conflict>
</comment>
<reference key="1">
    <citation type="journal article" date="2000" name="Nature">
        <title>Sequence and analysis of chromosome 1 of the plant Arabidopsis thaliana.</title>
        <authorList>
            <person name="Theologis A."/>
            <person name="Ecker J.R."/>
            <person name="Palm C.J."/>
            <person name="Federspiel N.A."/>
            <person name="Kaul S."/>
            <person name="White O."/>
            <person name="Alonso J."/>
            <person name="Altafi H."/>
            <person name="Araujo R."/>
            <person name="Bowman C.L."/>
            <person name="Brooks S.Y."/>
            <person name="Buehler E."/>
            <person name="Chan A."/>
            <person name="Chao Q."/>
            <person name="Chen H."/>
            <person name="Cheuk R.F."/>
            <person name="Chin C.W."/>
            <person name="Chung M.K."/>
            <person name="Conn L."/>
            <person name="Conway A.B."/>
            <person name="Conway A.R."/>
            <person name="Creasy T.H."/>
            <person name="Dewar K."/>
            <person name="Dunn P."/>
            <person name="Etgu P."/>
            <person name="Feldblyum T.V."/>
            <person name="Feng J.-D."/>
            <person name="Fong B."/>
            <person name="Fujii C.Y."/>
            <person name="Gill J.E."/>
            <person name="Goldsmith A.D."/>
            <person name="Haas B."/>
            <person name="Hansen N.F."/>
            <person name="Hughes B."/>
            <person name="Huizar L."/>
            <person name="Hunter J.L."/>
            <person name="Jenkins J."/>
            <person name="Johnson-Hopson C."/>
            <person name="Khan S."/>
            <person name="Khaykin E."/>
            <person name="Kim C.J."/>
            <person name="Koo H.L."/>
            <person name="Kremenetskaia I."/>
            <person name="Kurtz D.B."/>
            <person name="Kwan A."/>
            <person name="Lam B."/>
            <person name="Langin-Hooper S."/>
            <person name="Lee A."/>
            <person name="Lee J.M."/>
            <person name="Lenz C.A."/>
            <person name="Li J.H."/>
            <person name="Li Y.-P."/>
            <person name="Lin X."/>
            <person name="Liu S.X."/>
            <person name="Liu Z.A."/>
            <person name="Luros J.S."/>
            <person name="Maiti R."/>
            <person name="Marziali A."/>
            <person name="Militscher J."/>
            <person name="Miranda M."/>
            <person name="Nguyen M."/>
            <person name="Nierman W.C."/>
            <person name="Osborne B.I."/>
            <person name="Pai G."/>
            <person name="Peterson J."/>
            <person name="Pham P.K."/>
            <person name="Rizzo M."/>
            <person name="Rooney T."/>
            <person name="Rowley D."/>
            <person name="Sakano H."/>
            <person name="Salzberg S.L."/>
            <person name="Schwartz J.R."/>
            <person name="Shinn P."/>
            <person name="Southwick A.M."/>
            <person name="Sun H."/>
            <person name="Tallon L.J."/>
            <person name="Tambunga G."/>
            <person name="Toriumi M.J."/>
            <person name="Town C.D."/>
            <person name="Utterback T."/>
            <person name="Van Aken S."/>
            <person name="Vaysberg M."/>
            <person name="Vysotskaia V.S."/>
            <person name="Walker M."/>
            <person name="Wu D."/>
            <person name="Yu G."/>
            <person name="Fraser C.M."/>
            <person name="Venter J.C."/>
            <person name="Davis R.W."/>
        </authorList>
    </citation>
    <scope>NUCLEOTIDE SEQUENCE [LARGE SCALE GENOMIC DNA]</scope>
    <source>
        <strain>cv. Columbia</strain>
    </source>
</reference>
<reference key="2">
    <citation type="journal article" date="2017" name="Plant J.">
        <title>Araport11: a complete reannotation of the Arabidopsis thaliana reference genome.</title>
        <authorList>
            <person name="Cheng C.Y."/>
            <person name="Krishnakumar V."/>
            <person name="Chan A.P."/>
            <person name="Thibaud-Nissen F."/>
            <person name="Schobel S."/>
            <person name="Town C.D."/>
        </authorList>
    </citation>
    <scope>GENOME REANNOTATION</scope>
    <source>
        <strain>cv. Columbia</strain>
    </source>
</reference>
<reference key="3">
    <citation type="journal article" date="1998" name="Sex. Plant Reprod.">
        <title>MEI1, an Arabidopsis gene required for male meiosis: isolation and characterization.</title>
        <authorList>
            <person name="He C."/>
            <person name="Mascarenhas J.P."/>
        </authorList>
        <dbReference type="AGRICOLA" id="IND21959123"/>
    </citation>
    <scope>NUCLEOTIDE SEQUENCE [GENOMIC DNA] OF 518-717</scope>
    <source>
        <strain>cv. Wassilewskija</strain>
    </source>
</reference>
<reference key="4">
    <citation type="journal article" date="2014" name="Biol. Open">
        <title>The HIRA complex that deposits the histone H3.3 is conserved in Arabidopsis and facilitates transcriptional dynamics.</title>
        <authorList>
            <person name="Nie X."/>
            <person name="Wang H."/>
            <person name="Li J."/>
            <person name="Holec S."/>
            <person name="Berger F."/>
        </authorList>
    </citation>
    <scope>SUBCELLULAR LOCATION</scope>
    <scope>DISRUPTION PHENOTYPE</scope>
    <scope>SUBUNIT</scope>
    <scope>INTERACTION WITH HIRA</scope>
    <scope>GENE FAMILY</scope>
    <scope>NOMENCLATURE</scope>
    <source>
        <strain>cv. Columbia</strain>
    </source>
</reference>
<reference key="5">
    <citation type="journal article" date="2015" name="Plant J.">
        <title>The histone chaperone complex HIR maintains nucleosome occupancy and counterbalances impaired histone deposition in CAF-1 complex mutants.</title>
        <authorList>
            <person name="Duc C."/>
            <person name="Benoit M."/>
            <person name="Le Goff S."/>
            <person name="Simon L."/>
            <person name="Poulet A."/>
            <person name="Cotterell S."/>
            <person name="Tatout C."/>
            <person name="Probst A.V."/>
        </authorList>
    </citation>
    <scope>SUBUNIT</scope>
    <scope>GENE FAMILY</scope>
</reference>
<protein>
    <recommendedName>
        <fullName evidence="6">Ubinuclein-2</fullName>
        <shortName evidence="6">AtUBN2</shortName>
    </recommendedName>
    <alternativeName>
        <fullName evidence="6">Ubiquitously expressed nuclear protein 2</fullName>
    </alternativeName>
</protein>
<feature type="chain" id="PRO_0000441877" description="Ubinuclein-2">
    <location>
        <begin position="1"/>
        <end position="717"/>
    </location>
</feature>
<feature type="region of interest" description="Disordered" evidence="3">
    <location>
        <begin position="114"/>
        <end position="136"/>
    </location>
</feature>
<feature type="region of interest" description="Disordered" evidence="3">
    <location>
        <begin position="166"/>
        <end position="308"/>
    </location>
</feature>
<feature type="region of interest" description="Disordered" evidence="3">
    <location>
        <begin position="620"/>
        <end position="717"/>
    </location>
</feature>
<feature type="short sequence motif" description="Nuclear localization signal" evidence="2">
    <location>
        <begin position="634"/>
        <end position="641"/>
    </location>
</feature>
<feature type="compositionally biased region" description="Acidic residues" evidence="3">
    <location>
        <begin position="118"/>
        <end position="136"/>
    </location>
</feature>
<feature type="compositionally biased region" description="Polar residues" evidence="3">
    <location>
        <begin position="214"/>
        <end position="246"/>
    </location>
</feature>
<feature type="compositionally biased region" description="Polar residues" evidence="3">
    <location>
        <begin position="285"/>
        <end position="308"/>
    </location>
</feature>
<feature type="compositionally biased region" description="Basic and acidic residues" evidence="3">
    <location>
        <begin position="623"/>
        <end position="632"/>
    </location>
</feature>
<feature type="compositionally biased region" description="Basic and acidic residues" evidence="3">
    <location>
        <begin position="653"/>
        <end position="665"/>
    </location>
</feature>
<feature type="compositionally biased region" description="Basic residues" evidence="3">
    <location>
        <begin position="675"/>
        <end position="705"/>
    </location>
</feature>
<feature type="compositionally biased region" description="Polar residues" evidence="3">
    <location>
        <begin position="706"/>
        <end position="717"/>
    </location>
</feature>
<feature type="sequence conflict" description="In Ref. 3; AAD02829." evidence="8" ref="3">
    <original>H</original>
    <variation>D</variation>
    <location>
        <position position="545"/>
    </location>
</feature>
<feature type="sequence conflict" description="In Ref. 3; AAD02829." evidence="8" ref="3">
    <original>T</original>
    <variation>A</variation>
    <location>
        <position position="595"/>
    </location>
</feature>
<evidence type="ECO:0000250" key="1">
    <source>
        <dbReference type="UniProtKB" id="Q9NPG3"/>
    </source>
</evidence>
<evidence type="ECO:0000255" key="2">
    <source>
        <dbReference type="PROSITE-ProRule" id="PRU00768"/>
    </source>
</evidence>
<evidence type="ECO:0000256" key="3">
    <source>
        <dbReference type="SAM" id="MobiDB-lite"/>
    </source>
</evidence>
<evidence type="ECO:0000269" key="4">
    <source>
    </source>
</evidence>
<evidence type="ECO:0000269" key="5">
    <source>
    </source>
</evidence>
<evidence type="ECO:0000303" key="6">
    <source>
    </source>
</evidence>
<evidence type="ECO:0000303" key="7">
    <source ref="3"/>
</evidence>
<evidence type="ECO:0000305" key="8"/>
<evidence type="ECO:0000312" key="9">
    <source>
        <dbReference type="Araport" id="AT1G77310"/>
    </source>
</evidence>
<evidence type="ECO:0000312" key="10">
    <source>
        <dbReference type="EMBL" id="AAC34359.1"/>
    </source>
</evidence>
<evidence type="ECO:0000312" key="11">
    <source>
        <dbReference type="EMBL" id="AAG29192.1"/>
    </source>
</evidence>
<keyword id="KW-0156">Chromatin regulator</keyword>
<keyword id="KW-0539">Nucleus</keyword>
<keyword id="KW-1185">Reference proteome</keyword>
<organism>
    <name type="scientific">Arabidopsis thaliana</name>
    <name type="common">Mouse-ear cress</name>
    <dbReference type="NCBI Taxonomy" id="3702"/>
    <lineage>
        <taxon>Eukaryota</taxon>
        <taxon>Viridiplantae</taxon>
        <taxon>Streptophyta</taxon>
        <taxon>Embryophyta</taxon>
        <taxon>Tracheophyta</taxon>
        <taxon>Spermatophyta</taxon>
        <taxon>Magnoliopsida</taxon>
        <taxon>eudicotyledons</taxon>
        <taxon>Gunneridae</taxon>
        <taxon>Pentapetalae</taxon>
        <taxon>rosids</taxon>
        <taxon>malvids</taxon>
        <taxon>Brassicales</taxon>
        <taxon>Brassicaceae</taxon>
        <taxon>Camelineae</taxon>
        <taxon>Arabidopsis</taxon>
    </lineage>
</organism>
<dbReference type="EMBL" id="AC004260">
    <property type="protein sequence ID" value="AAC34359.1"/>
    <property type="status" value="ALT_SEQ"/>
    <property type="molecule type" value="Genomic_DNA"/>
</dbReference>
<dbReference type="EMBL" id="AC078898">
    <property type="protein sequence ID" value="AAG29192.1"/>
    <property type="status" value="ALT_SEQ"/>
    <property type="molecule type" value="Genomic_DNA"/>
</dbReference>
<dbReference type="EMBL" id="CP002684">
    <property type="protein sequence ID" value="AEE35962.1"/>
    <property type="molecule type" value="Genomic_DNA"/>
</dbReference>
<dbReference type="EMBL" id="AF074849">
    <property type="protein sequence ID" value="AAD02829.1"/>
    <property type="molecule type" value="Genomic_DNA"/>
</dbReference>
<dbReference type="PIR" id="A96802">
    <property type="entry name" value="A96802"/>
</dbReference>
<dbReference type="PIR" id="T00459">
    <property type="entry name" value="T00459"/>
</dbReference>
<dbReference type="RefSeq" id="NP_177855.4">
    <property type="nucleotide sequence ID" value="NM_106380.7"/>
</dbReference>
<dbReference type="FunCoup" id="F4I700">
    <property type="interactions" value="178"/>
</dbReference>
<dbReference type="STRING" id="3702.F4I700"/>
<dbReference type="iPTMnet" id="F4I700"/>
<dbReference type="PaxDb" id="3702-AT1G77310.1"/>
<dbReference type="ProteomicsDB" id="233046"/>
<dbReference type="EnsemblPlants" id="AT1G77310.1">
    <property type="protein sequence ID" value="AT1G77310.1"/>
    <property type="gene ID" value="AT1G77310"/>
</dbReference>
<dbReference type="GeneID" id="844067"/>
<dbReference type="Gramene" id="AT1G77310.1">
    <property type="protein sequence ID" value="AT1G77310.1"/>
    <property type="gene ID" value="AT1G77310"/>
</dbReference>
<dbReference type="KEGG" id="ath:AT1G77310"/>
<dbReference type="Araport" id="AT1G77310"/>
<dbReference type="TAIR" id="AT1G77310">
    <property type="gene designation" value="UBN2"/>
</dbReference>
<dbReference type="eggNOG" id="ENOG502QRNW">
    <property type="taxonomic scope" value="Eukaryota"/>
</dbReference>
<dbReference type="HOGENOM" id="CLU_016217_1_0_1"/>
<dbReference type="InParanoid" id="F4I700"/>
<dbReference type="OMA" id="NEMVNQP"/>
<dbReference type="PRO" id="PR:F4I700"/>
<dbReference type="Proteomes" id="UP000006548">
    <property type="component" value="Chromosome 1"/>
</dbReference>
<dbReference type="ExpressionAtlas" id="F4I700">
    <property type="expression patterns" value="baseline and differential"/>
</dbReference>
<dbReference type="GO" id="GO:0005730">
    <property type="term" value="C:nucleolus"/>
    <property type="evidence" value="ECO:0000314"/>
    <property type="project" value="UniProtKB"/>
</dbReference>
<dbReference type="GO" id="GO:0005634">
    <property type="term" value="C:nucleus"/>
    <property type="evidence" value="ECO:0000314"/>
    <property type="project" value="UniProtKB"/>
</dbReference>
<dbReference type="GO" id="GO:0030875">
    <property type="term" value="C:rDNA protrusion"/>
    <property type="evidence" value="ECO:0000314"/>
    <property type="project" value="UniProtKB"/>
</dbReference>
<dbReference type="GO" id="GO:0006325">
    <property type="term" value="P:chromatin organization"/>
    <property type="evidence" value="ECO:0007669"/>
    <property type="project" value="UniProtKB-KW"/>
</dbReference>
<dbReference type="InterPro" id="IPR014840">
    <property type="entry name" value="HRD"/>
</dbReference>
<dbReference type="PANTHER" id="PTHR21669">
    <property type="entry name" value="CAPZ-INTERACTING PROTEIN AND RELATED PROTEINS"/>
    <property type="match status" value="1"/>
</dbReference>
<dbReference type="PANTHER" id="PTHR21669:SF41">
    <property type="entry name" value="UBINUCLEIN-2"/>
    <property type="match status" value="1"/>
</dbReference>
<dbReference type="Pfam" id="PF08729">
    <property type="entry name" value="HUN"/>
    <property type="match status" value="1"/>
</dbReference>
<gene>
    <name evidence="6" type="primary">UBN2</name>
    <name evidence="7" type="synonym">G1</name>
    <name evidence="9" type="ordered locus">At1g77310</name>
    <name evidence="11" type="ORF">F2P24.2</name>
    <name evidence="10" type="ORF">T14N5.16</name>
</gene>
<name>UBN2_ARATH</name>
<sequence length="717" mass="79143">MEDEPKLPTDDGPTFNESCKISSEILTAGDRKLLKVELLKEETTLVSWKKLMDEASKENGGLFVSAPERLLNANPNLEFRLAPGAQTENEMVNQPHPNRLNSVIAKIERLYMGKDGSDGEELDGAPDDDDYDTEDSFIDDAELDEYFEVDNSPIKHDGFFVNRGKLERIEPSATSNQQQPKKRRRKESAKPCGDVVDVSRKRAKMAKTAGGKDQSASPGPSSKKISNDSKTVQDSFSPLKAQNGNDSLVLENVKHTDKANHQPMNATSPKSKAAGSSGPLHPKCSSKSVHEQSNSPPGKSRPNVSAKSAVVRQQVNNGMPDLDIATESKTSIQISKKSGSNGRPKYSTLEKAIRNLEKLVAESRPPAATENQDADISSQAVKRGLPGDVKLHLAKVARIAYASQGEISGELINRLMGIVGHLIQIRSLKRNLKIMIDSIVTANREKDTRFQRIKSEITEMLKTQVPLVESQETNQEAGTSDDFQDVGSLGKSPVKKFVMDVALEEKLCDLYDVFVEGMDEHSGSQIRKLYSDLAQLWPNSLVDNHEIRRAICREKERRRALEGNIGKEMDQTKITKKKQTQLVPKSEGITYPDKTSGVEVKASVVLTATTTSLVDCQPAADSSFERSKQQHEKLKRTSSLSNPAAEGKKVRRKTEPALEETHLPAEKPLVLALKRQTHLKSKTHKQVQVHPQSKAHKQAQVHPKAKTQTPPDLNLPS</sequence>
<accession>F4I700</accession>
<accession>O80664</accession>
<accession>Q9FVX7</accession>
<accession>Q9ZT59</accession>